<dbReference type="EC" id="4.2.3.4" evidence="1"/>
<dbReference type="EC" id="2.5.1.19" evidence="1"/>
<dbReference type="EC" id="2.7.1.71" evidence="1"/>
<dbReference type="EC" id="4.2.1.10" evidence="1"/>
<dbReference type="EC" id="1.1.1.25" evidence="1"/>
<dbReference type="EMBL" id="CP000498">
    <property type="protein sequence ID" value="ABN65979.2"/>
    <property type="molecule type" value="Genomic_DNA"/>
</dbReference>
<dbReference type="RefSeq" id="XP_001384008.2">
    <property type="nucleotide sequence ID" value="XM_001383971.1"/>
</dbReference>
<dbReference type="SMR" id="A3LSZ2"/>
<dbReference type="FunCoup" id="A3LSZ2">
    <property type="interactions" value="500"/>
</dbReference>
<dbReference type="STRING" id="322104.A3LSZ2"/>
<dbReference type="GeneID" id="4838646"/>
<dbReference type="KEGG" id="pic:PICST_89141"/>
<dbReference type="eggNOG" id="KOG0692">
    <property type="taxonomic scope" value="Eukaryota"/>
</dbReference>
<dbReference type="HOGENOM" id="CLU_001201_1_2_1"/>
<dbReference type="InParanoid" id="A3LSZ2"/>
<dbReference type="OMA" id="SWANMSW"/>
<dbReference type="OrthoDB" id="197068at2759"/>
<dbReference type="UniPathway" id="UPA00053">
    <property type="reaction ID" value="UER00085"/>
</dbReference>
<dbReference type="UniPathway" id="UPA00053">
    <property type="reaction ID" value="UER00086"/>
</dbReference>
<dbReference type="UniPathway" id="UPA00053">
    <property type="reaction ID" value="UER00087"/>
</dbReference>
<dbReference type="UniPathway" id="UPA00053">
    <property type="reaction ID" value="UER00088"/>
</dbReference>
<dbReference type="UniPathway" id="UPA00053">
    <property type="reaction ID" value="UER00089"/>
</dbReference>
<dbReference type="Proteomes" id="UP000002258">
    <property type="component" value="Chromosome 4"/>
</dbReference>
<dbReference type="GO" id="GO:0005737">
    <property type="term" value="C:cytoplasm"/>
    <property type="evidence" value="ECO:0007669"/>
    <property type="project" value="UniProtKB-SubCell"/>
</dbReference>
<dbReference type="GO" id="GO:0003855">
    <property type="term" value="F:3-dehydroquinate dehydratase activity"/>
    <property type="evidence" value="ECO:0007669"/>
    <property type="project" value="UniProtKB-UniRule"/>
</dbReference>
<dbReference type="GO" id="GO:0003856">
    <property type="term" value="F:3-dehydroquinate synthase activity"/>
    <property type="evidence" value="ECO:0007669"/>
    <property type="project" value="UniProtKB-UniRule"/>
</dbReference>
<dbReference type="GO" id="GO:0003866">
    <property type="term" value="F:3-phosphoshikimate 1-carboxyvinyltransferase activity"/>
    <property type="evidence" value="ECO:0007669"/>
    <property type="project" value="UniProtKB-UniRule"/>
</dbReference>
<dbReference type="GO" id="GO:0005524">
    <property type="term" value="F:ATP binding"/>
    <property type="evidence" value="ECO:0007669"/>
    <property type="project" value="UniProtKB-UniRule"/>
</dbReference>
<dbReference type="GO" id="GO:0046872">
    <property type="term" value="F:metal ion binding"/>
    <property type="evidence" value="ECO:0007669"/>
    <property type="project" value="UniProtKB-UniRule"/>
</dbReference>
<dbReference type="GO" id="GO:0004764">
    <property type="term" value="F:shikimate 3-dehydrogenase (NADP+) activity"/>
    <property type="evidence" value="ECO:0007669"/>
    <property type="project" value="UniProtKB-UniRule"/>
</dbReference>
<dbReference type="GO" id="GO:0004765">
    <property type="term" value="F:shikimate kinase activity"/>
    <property type="evidence" value="ECO:0007669"/>
    <property type="project" value="UniProtKB-UniRule"/>
</dbReference>
<dbReference type="GO" id="GO:0008652">
    <property type="term" value="P:amino acid biosynthetic process"/>
    <property type="evidence" value="ECO:0007669"/>
    <property type="project" value="UniProtKB-KW"/>
</dbReference>
<dbReference type="GO" id="GO:0009073">
    <property type="term" value="P:aromatic amino acid family biosynthetic process"/>
    <property type="evidence" value="ECO:0007669"/>
    <property type="project" value="UniProtKB-UniRule"/>
</dbReference>
<dbReference type="GO" id="GO:0009423">
    <property type="term" value="P:chorismate biosynthetic process"/>
    <property type="evidence" value="ECO:0007669"/>
    <property type="project" value="UniProtKB-UniRule"/>
</dbReference>
<dbReference type="CDD" id="cd00502">
    <property type="entry name" value="DHQase_I"/>
    <property type="match status" value="1"/>
</dbReference>
<dbReference type="CDD" id="cd08195">
    <property type="entry name" value="DHQS"/>
    <property type="match status" value="1"/>
</dbReference>
<dbReference type="CDD" id="cd01556">
    <property type="entry name" value="EPSP_synthase"/>
    <property type="match status" value="1"/>
</dbReference>
<dbReference type="CDD" id="cd01065">
    <property type="entry name" value="NAD_bind_Shikimate_DH"/>
    <property type="match status" value="1"/>
</dbReference>
<dbReference type="CDD" id="cd00464">
    <property type="entry name" value="SK"/>
    <property type="match status" value="1"/>
</dbReference>
<dbReference type="FunFam" id="1.20.1090.10:FF:000007">
    <property type="entry name" value="Pentafunctional AROM polypeptide"/>
    <property type="match status" value="1"/>
</dbReference>
<dbReference type="FunFam" id="3.20.20.70:FF:000135">
    <property type="entry name" value="Pentafunctional AROM polypeptide"/>
    <property type="match status" value="1"/>
</dbReference>
<dbReference type="FunFam" id="3.40.50.1970:FF:000007">
    <property type="entry name" value="Pentafunctional AROM polypeptide"/>
    <property type="match status" value="1"/>
</dbReference>
<dbReference type="FunFam" id="3.40.50.300:FF:001256">
    <property type="entry name" value="Pentafunctional AROM polypeptide"/>
    <property type="match status" value="1"/>
</dbReference>
<dbReference type="FunFam" id="3.65.10.10:FF:000007">
    <property type="entry name" value="Pentafunctional AROM polypeptide"/>
    <property type="match status" value="1"/>
</dbReference>
<dbReference type="FunFam" id="3.65.10.10:FF:000008">
    <property type="entry name" value="Pentafunctional AROM polypeptide"/>
    <property type="match status" value="1"/>
</dbReference>
<dbReference type="Gene3D" id="3.40.50.1970">
    <property type="match status" value="1"/>
</dbReference>
<dbReference type="Gene3D" id="3.20.20.70">
    <property type="entry name" value="Aldolase class I"/>
    <property type="match status" value="1"/>
</dbReference>
<dbReference type="Gene3D" id="1.20.1090.10">
    <property type="entry name" value="Dehydroquinate synthase-like - alpha domain"/>
    <property type="match status" value="1"/>
</dbReference>
<dbReference type="Gene3D" id="3.65.10.10">
    <property type="entry name" value="Enolpyruvate transferase domain"/>
    <property type="match status" value="2"/>
</dbReference>
<dbReference type="Gene3D" id="3.40.50.10860">
    <property type="entry name" value="Leucine Dehydrogenase, chain A, domain 1"/>
    <property type="match status" value="1"/>
</dbReference>
<dbReference type="Gene3D" id="3.40.50.720">
    <property type="entry name" value="NAD(P)-binding Rossmann-like Domain"/>
    <property type="match status" value="1"/>
</dbReference>
<dbReference type="Gene3D" id="3.40.50.300">
    <property type="entry name" value="P-loop containing nucleotide triphosphate hydrolases"/>
    <property type="match status" value="1"/>
</dbReference>
<dbReference type="HAMAP" id="MF_00210">
    <property type="entry name" value="EPSP_synth"/>
    <property type="match status" value="1"/>
</dbReference>
<dbReference type="HAMAP" id="MF_03143">
    <property type="entry name" value="Pentafunct_AroM"/>
    <property type="match status" value="1"/>
</dbReference>
<dbReference type="HAMAP" id="MF_00109">
    <property type="entry name" value="Shikimate_kinase"/>
    <property type="match status" value="1"/>
</dbReference>
<dbReference type="InterPro" id="IPR013785">
    <property type="entry name" value="Aldolase_TIM"/>
</dbReference>
<dbReference type="InterPro" id="IPR046346">
    <property type="entry name" value="Aminoacid_DH-like_N_sf"/>
</dbReference>
<dbReference type="InterPro" id="IPR016037">
    <property type="entry name" value="DHQ_synth_AroB"/>
</dbReference>
<dbReference type="InterPro" id="IPR030960">
    <property type="entry name" value="DHQS/DOIS_N"/>
</dbReference>
<dbReference type="InterPro" id="IPR056179">
    <property type="entry name" value="DHQS_C"/>
</dbReference>
<dbReference type="InterPro" id="IPR001381">
    <property type="entry name" value="DHquinase_I"/>
</dbReference>
<dbReference type="InterPro" id="IPR001986">
    <property type="entry name" value="Enolpyruvate_Tfrase_dom"/>
</dbReference>
<dbReference type="InterPro" id="IPR036968">
    <property type="entry name" value="Enolpyruvate_Tfrase_sf"/>
</dbReference>
<dbReference type="InterPro" id="IPR006264">
    <property type="entry name" value="EPSP_synthase"/>
</dbReference>
<dbReference type="InterPro" id="IPR023193">
    <property type="entry name" value="EPSP_synthase_CS"/>
</dbReference>
<dbReference type="InterPro" id="IPR036291">
    <property type="entry name" value="NAD(P)-bd_dom_sf"/>
</dbReference>
<dbReference type="InterPro" id="IPR027417">
    <property type="entry name" value="P-loop_NTPase"/>
</dbReference>
<dbReference type="InterPro" id="IPR008289">
    <property type="entry name" value="Pentafunct_AroM"/>
</dbReference>
<dbReference type="InterPro" id="IPR013792">
    <property type="entry name" value="RNA3'P_cycl/enolpyr_Trfase_a/b"/>
</dbReference>
<dbReference type="InterPro" id="IPR041121">
    <property type="entry name" value="SDH_C"/>
</dbReference>
<dbReference type="InterPro" id="IPR031322">
    <property type="entry name" value="Shikimate/glucono_kinase"/>
</dbReference>
<dbReference type="InterPro" id="IPR013708">
    <property type="entry name" value="Shikimate_DH-bd_N"/>
</dbReference>
<dbReference type="InterPro" id="IPR010110">
    <property type="entry name" value="Shikimate_DH_AroM-type"/>
</dbReference>
<dbReference type="InterPro" id="IPR000623">
    <property type="entry name" value="Shikimate_kinase/TSH1"/>
</dbReference>
<dbReference type="InterPro" id="IPR006151">
    <property type="entry name" value="Shikm_DH/Glu-tRNA_Rdtase"/>
</dbReference>
<dbReference type="NCBIfam" id="TIGR01356">
    <property type="entry name" value="aroA"/>
    <property type="match status" value="1"/>
</dbReference>
<dbReference type="NCBIfam" id="TIGR01357">
    <property type="entry name" value="aroB"/>
    <property type="match status" value="1"/>
</dbReference>
<dbReference type="NCBIfam" id="TIGR01093">
    <property type="entry name" value="aroD"/>
    <property type="match status" value="1"/>
</dbReference>
<dbReference type="NCBIfam" id="TIGR01809">
    <property type="entry name" value="Shik-DH-AROM"/>
    <property type="match status" value="1"/>
</dbReference>
<dbReference type="PANTHER" id="PTHR21090">
    <property type="entry name" value="AROM/DEHYDROQUINATE SYNTHASE"/>
    <property type="match status" value="1"/>
</dbReference>
<dbReference type="PANTHER" id="PTHR21090:SF5">
    <property type="entry name" value="PENTAFUNCTIONAL AROM POLYPEPTIDE"/>
    <property type="match status" value="1"/>
</dbReference>
<dbReference type="Pfam" id="PF01761">
    <property type="entry name" value="DHQ_synthase"/>
    <property type="match status" value="1"/>
</dbReference>
<dbReference type="Pfam" id="PF24621">
    <property type="entry name" value="DHQS_C"/>
    <property type="match status" value="1"/>
</dbReference>
<dbReference type="Pfam" id="PF01487">
    <property type="entry name" value="DHquinase_I"/>
    <property type="match status" value="1"/>
</dbReference>
<dbReference type="Pfam" id="PF00275">
    <property type="entry name" value="EPSP_synthase"/>
    <property type="match status" value="1"/>
</dbReference>
<dbReference type="Pfam" id="PF18317">
    <property type="entry name" value="SDH_C"/>
    <property type="match status" value="1"/>
</dbReference>
<dbReference type="Pfam" id="PF01488">
    <property type="entry name" value="Shikimate_DH"/>
    <property type="match status" value="1"/>
</dbReference>
<dbReference type="Pfam" id="PF08501">
    <property type="entry name" value="Shikimate_dh_N"/>
    <property type="match status" value="1"/>
</dbReference>
<dbReference type="Pfam" id="PF01202">
    <property type="entry name" value="SKI"/>
    <property type="match status" value="1"/>
</dbReference>
<dbReference type="PIRSF" id="PIRSF000514">
    <property type="entry name" value="Pentafunct_AroM"/>
    <property type="match status" value="1"/>
</dbReference>
<dbReference type="PRINTS" id="PR01100">
    <property type="entry name" value="SHIKIMTKNASE"/>
</dbReference>
<dbReference type="SUPFAM" id="SSF51569">
    <property type="entry name" value="Aldolase"/>
    <property type="match status" value="1"/>
</dbReference>
<dbReference type="SUPFAM" id="SSF53223">
    <property type="entry name" value="Aminoacid dehydrogenase-like, N-terminal domain"/>
    <property type="match status" value="1"/>
</dbReference>
<dbReference type="SUPFAM" id="SSF56796">
    <property type="entry name" value="Dehydroquinate synthase-like"/>
    <property type="match status" value="1"/>
</dbReference>
<dbReference type="SUPFAM" id="SSF55205">
    <property type="entry name" value="EPT/RTPC-like"/>
    <property type="match status" value="1"/>
</dbReference>
<dbReference type="SUPFAM" id="SSF51735">
    <property type="entry name" value="NAD(P)-binding Rossmann-fold domains"/>
    <property type="match status" value="1"/>
</dbReference>
<dbReference type="SUPFAM" id="SSF52540">
    <property type="entry name" value="P-loop containing nucleoside triphosphate hydrolases"/>
    <property type="match status" value="1"/>
</dbReference>
<dbReference type="PROSITE" id="PS00104">
    <property type="entry name" value="EPSP_SYNTHASE_1"/>
    <property type="match status" value="1"/>
</dbReference>
<dbReference type="PROSITE" id="PS00885">
    <property type="entry name" value="EPSP_SYNTHASE_2"/>
    <property type="match status" value="1"/>
</dbReference>
<feature type="chain" id="PRO_0000406736" description="Pentafunctional AROM polypeptide">
    <location>
        <begin position="1"/>
        <end position="1571"/>
    </location>
</feature>
<feature type="region of interest" description="3-dehydroquinate synthase">
    <location>
        <begin position="1"/>
        <end position="380"/>
    </location>
</feature>
<feature type="region of interest" description="EPSP synthase">
    <location>
        <begin position="393"/>
        <end position="843"/>
    </location>
</feature>
<feature type="region of interest" description="Shikimate kinase">
    <location>
        <begin position="868"/>
        <end position="1058"/>
    </location>
</feature>
<feature type="region of interest" description="3-dehydroquinase">
    <location>
        <begin position="1059"/>
        <end position="1271"/>
    </location>
</feature>
<feature type="region of interest" description="Shikimate dehydrogenase">
    <location>
        <begin position="1284"/>
        <end position="1571"/>
    </location>
</feature>
<feature type="active site" description="Proton acceptor; for 3-dehydroquinate synthase activity" evidence="1">
    <location>
        <position position="254"/>
    </location>
</feature>
<feature type="active site" description="Proton acceptor; for 3-dehydroquinate synthase activity" evidence="1">
    <location>
        <position position="269"/>
    </location>
</feature>
<feature type="active site" description="For EPSP synthase activity" evidence="1">
    <location>
        <position position="825"/>
    </location>
</feature>
<feature type="active site" description="Schiff-base intermediate with substrate; for 3-dehydroquinate dehydratase activity" evidence="1">
    <location>
        <position position="1204"/>
    </location>
</feature>
<feature type="binding site" evidence="1">
    <location>
        <begin position="43"/>
        <end position="45"/>
    </location>
    <ligand>
        <name>NAD(+)</name>
        <dbReference type="ChEBI" id="CHEBI:57540"/>
    </ligand>
</feature>
<feature type="binding site" evidence="1">
    <location>
        <begin position="81"/>
        <end position="84"/>
    </location>
    <ligand>
        <name>NAD(+)</name>
        <dbReference type="ChEBI" id="CHEBI:57540"/>
    </ligand>
</feature>
<feature type="binding site" evidence="1">
    <location>
        <begin position="112"/>
        <end position="114"/>
    </location>
    <ligand>
        <name>NAD(+)</name>
        <dbReference type="ChEBI" id="CHEBI:57540"/>
    </ligand>
</feature>
<feature type="binding site" evidence="1">
    <location>
        <position position="117"/>
    </location>
    <ligand>
        <name>NAD(+)</name>
        <dbReference type="ChEBI" id="CHEBI:57540"/>
    </ligand>
</feature>
<feature type="binding site" evidence="1">
    <location>
        <position position="128"/>
    </location>
    <ligand>
        <name>7-phospho-2-dehydro-3-deoxy-D-arabino-heptonate</name>
        <dbReference type="ChEBI" id="CHEBI:58394"/>
    </ligand>
</feature>
<feature type="binding site" evidence="1">
    <location>
        <begin position="137"/>
        <end position="138"/>
    </location>
    <ligand>
        <name>NAD(+)</name>
        <dbReference type="ChEBI" id="CHEBI:57540"/>
    </ligand>
</feature>
<feature type="binding site" evidence="1">
    <location>
        <position position="144"/>
    </location>
    <ligand>
        <name>7-phospho-2-dehydro-3-deoxy-D-arabino-heptonate</name>
        <dbReference type="ChEBI" id="CHEBI:58394"/>
    </ligand>
</feature>
<feature type="binding site" evidence="1">
    <location>
        <position position="150"/>
    </location>
    <ligand>
        <name>7-phospho-2-dehydro-3-deoxy-D-arabino-heptonate</name>
        <dbReference type="ChEBI" id="CHEBI:58394"/>
    </ligand>
</feature>
<feature type="binding site" evidence="1">
    <location>
        <position position="159"/>
    </location>
    <ligand>
        <name>NAD(+)</name>
        <dbReference type="ChEBI" id="CHEBI:57540"/>
    </ligand>
</feature>
<feature type="binding site" evidence="1">
    <location>
        <position position="160"/>
    </location>
    <ligand>
        <name>7-phospho-2-dehydro-3-deoxy-D-arabino-heptonate</name>
        <dbReference type="ChEBI" id="CHEBI:58394"/>
    </ligand>
</feature>
<feature type="binding site" evidence="1">
    <location>
        <begin position="177"/>
        <end position="180"/>
    </location>
    <ligand>
        <name>NAD(+)</name>
        <dbReference type="ChEBI" id="CHEBI:57540"/>
    </ligand>
</feature>
<feature type="binding site" evidence="1">
    <location>
        <position position="188"/>
    </location>
    <ligand>
        <name>NAD(+)</name>
        <dbReference type="ChEBI" id="CHEBI:57540"/>
    </ligand>
</feature>
<feature type="binding site" evidence="1">
    <location>
        <begin position="192"/>
        <end position="195"/>
    </location>
    <ligand>
        <name>7-phospho-2-dehydro-3-deoxy-D-arabino-heptonate</name>
        <dbReference type="ChEBI" id="CHEBI:58394"/>
    </ligand>
</feature>
<feature type="binding site" evidence="1">
    <location>
        <position position="192"/>
    </location>
    <ligand>
        <name>Zn(2+)</name>
        <dbReference type="ChEBI" id="CHEBI:29105"/>
        <note>catalytic</note>
    </ligand>
</feature>
<feature type="binding site" evidence="1">
    <location>
        <position position="244"/>
    </location>
    <ligand>
        <name>7-phospho-2-dehydro-3-deoxy-D-arabino-heptonate</name>
        <dbReference type="ChEBI" id="CHEBI:58394"/>
    </ligand>
</feature>
<feature type="binding site" evidence="1">
    <location>
        <begin position="258"/>
        <end position="262"/>
    </location>
    <ligand>
        <name>7-phospho-2-dehydro-3-deoxy-D-arabino-heptonate</name>
        <dbReference type="ChEBI" id="CHEBI:58394"/>
    </ligand>
</feature>
<feature type="binding site" evidence="1">
    <location>
        <position position="265"/>
    </location>
    <ligand>
        <name>7-phospho-2-dehydro-3-deoxy-D-arabino-heptonate</name>
        <dbReference type="ChEBI" id="CHEBI:58394"/>
    </ligand>
</feature>
<feature type="binding site" evidence="1">
    <location>
        <position position="265"/>
    </location>
    <ligand>
        <name>Zn(2+)</name>
        <dbReference type="ChEBI" id="CHEBI:29105"/>
        <note>catalytic</note>
    </ligand>
</feature>
<feature type="binding site" evidence="1">
    <location>
        <position position="281"/>
    </location>
    <ligand>
        <name>7-phospho-2-dehydro-3-deoxy-D-arabino-heptonate</name>
        <dbReference type="ChEBI" id="CHEBI:58394"/>
    </ligand>
</feature>
<feature type="binding site" evidence="1">
    <location>
        <position position="281"/>
    </location>
    <ligand>
        <name>Zn(2+)</name>
        <dbReference type="ChEBI" id="CHEBI:29105"/>
        <note>catalytic</note>
    </ligand>
</feature>
<feature type="binding site" evidence="1">
    <location>
        <position position="352"/>
    </location>
    <ligand>
        <name>7-phospho-2-dehydro-3-deoxy-D-arabino-heptonate</name>
        <dbReference type="ChEBI" id="CHEBI:58394"/>
    </ligand>
</feature>
<feature type="binding site" evidence="1">
    <location>
        <begin position="875"/>
        <end position="882"/>
    </location>
    <ligand>
        <name>ATP</name>
        <dbReference type="ChEBI" id="CHEBI:30616"/>
    </ligand>
</feature>
<protein>
    <recommendedName>
        <fullName evidence="1">Pentafunctional AROM polypeptide</fullName>
    </recommendedName>
    <domain>
        <recommendedName>
            <fullName evidence="1">3-dehydroquinate synthase</fullName>
            <shortName evidence="1">DHQS</shortName>
            <ecNumber evidence="1">4.2.3.4</ecNumber>
        </recommendedName>
    </domain>
    <domain>
        <recommendedName>
            <fullName evidence="1">3-phosphoshikimate 1-carboxyvinyltransferase</fullName>
            <ecNumber evidence="1">2.5.1.19</ecNumber>
        </recommendedName>
        <alternativeName>
            <fullName evidence="1">5-enolpyruvylshikimate-3-phosphate synthase</fullName>
            <shortName evidence="1">EPSP synthase</shortName>
            <shortName evidence="1">EPSPS</shortName>
        </alternativeName>
    </domain>
    <domain>
        <recommendedName>
            <fullName evidence="1">Shikimate kinase</fullName>
            <shortName evidence="1">SK</shortName>
            <ecNumber evidence="1">2.7.1.71</ecNumber>
        </recommendedName>
    </domain>
    <domain>
        <recommendedName>
            <fullName evidence="1">3-dehydroquinate dehydratase</fullName>
            <shortName evidence="1">3-dehydroquinase</shortName>
            <ecNumber evidence="1">4.2.1.10</ecNumber>
        </recommendedName>
    </domain>
    <domain>
        <recommendedName>
            <fullName evidence="1">Shikimate dehydrogenase</fullName>
            <ecNumber evidence="1">1.1.1.25</ecNumber>
        </recommendedName>
    </domain>
</protein>
<gene>
    <name evidence="1" type="primary">ARO1</name>
    <name type="ORF">PICST_89141</name>
</gene>
<comment type="function">
    <text evidence="1">The AROM polypeptide catalyzes 5 consecutive enzymatic reactions in prechorismate polyaromatic amino acid biosynthesis.</text>
</comment>
<comment type="catalytic activity">
    <reaction evidence="1">
        <text>7-phospho-2-dehydro-3-deoxy-D-arabino-heptonate = 3-dehydroquinate + phosphate</text>
        <dbReference type="Rhea" id="RHEA:21968"/>
        <dbReference type="ChEBI" id="CHEBI:32364"/>
        <dbReference type="ChEBI" id="CHEBI:43474"/>
        <dbReference type="ChEBI" id="CHEBI:58394"/>
        <dbReference type="EC" id="4.2.3.4"/>
    </reaction>
</comment>
<comment type="catalytic activity">
    <reaction evidence="1">
        <text>3-dehydroquinate = 3-dehydroshikimate + H2O</text>
        <dbReference type="Rhea" id="RHEA:21096"/>
        <dbReference type="ChEBI" id="CHEBI:15377"/>
        <dbReference type="ChEBI" id="CHEBI:16630"/>
        <dbReference type="ChEBI" id="CHEBI:32364"/>
        <dbReference type="EC" id="4.2.1.10"/>
    </reaction>
</comment>
<comment type="catalytic activity">
    <reaction evidence="1">
        <text>shikimate + NADP(+) = 3-dehydroshikimate + NADPH + H(+)</text>
        <dbReference type="Rhea" id="RHEA:17737"/>
        <dbReference type="ChEBI" id="CHEBI:15378"/>
        <dbReference type="ChEBI" id="CHEBI:16630"/>
        <dbReference type="ChEBI" id="CHEBI:36208"/>
        <dbReference type="ChEBI" id="CHEBI:57783"/>
        <dbReference type="ChEBI" id="CHEBI:58349"/>
        <dbReference type="EC" id="1.1.1.25"/>
    </reaction>
</comment>
<comment type="catalytic activity">
    <reaction evidence="1">
        <text>shikimate + ATP = 3-phosphoshikimate + ADP + H(+)</text>
        <dbReference type="Rhea" id="RHEA:13121"/>
        <dbReference type="ChEBI" id="CHEBI:15378"/>
        <dbReference type="ChEBI" id="CHEBI:30616"/>
        <dbReference type="ChEBI" id="CHEBI:36208"/>
        <dbReference type="ChEBI" id="CHEBI:145989"/>
        <dbReference type="ChEBI" id="CHEBI:456216"/>
        <dbReference type="EC" id="2.7.1.71"/>
    </reaction>
</comment>
<comment type="catalytic activity">
    <reaction evidence="1">
        <text>3-phosphoshikimate + phosphoenolpyruvate = 5-O-(1-carboxyvinyl)-3-phosphoshikimate + phosphate</text>
        <dbReference type="Rhea" id="RHEA:21256"/>
        <dbReference type="ChEBI" id="CHEBI:43474"/>
        <dbReference type="ChEBI" id="CHEBI:57701"/>
        <dbReference type="ChEBI" id="CHEBI:58702"/>
        <dbReference type="ChEBI" id="CHEBI:145989"/>
        <dbReference type="EC" id="2.5.1.19"/>
    </reaction>
</comment>
<comment type="cofactor">
    <cofactor>
        <name>Zn(2+)</name>
        <dbReference type="ChEBI" id="CHEBI:29105"/>
    </cofactor>
    <text>Binds 2 Zn(2+) ions per subunit.</text>
</comment>
<comment type="pathway">
    <text evidence="1">Metabolic intermediate biosynthesis; chorismate biosynthesis; chorismate from D-erythrose 4-phosphate and phosphoenolpyruvate: step 2/7.</text>
</comment>
<comment type="pathway">
    <text evidence="1">Metabolic intermediate biosynthesis; chorismate biosynthesis; chorismate from D-erythrose 4-phosphate and phosphoenolpyruvate: step 3/7.</text>
</comment>
<comment type="pathway">
    <text evidence="1">Metabolic intermediate biosynthesis; chorismate biosynthesis; chorismate from D-erythrose 4-phosphate and phosphoenolpyruvate: step 4/7.</text>
</comment>
<comment type="pathway">
    <text evidence="1">Metabolic intermediate biosynthesis; chorismate biosynthesis; chorismate from D-erythrose 4-phosphate and phosphoenolpyruvate: step 5/7.</text>
</comment>
<comment type="pathway">
    <text evidence="1">Metabolic intermediate biosynthesis; chorismate biosynthesis; chorismate from D-erythrose 4-phosphate and phosphoenolpyruvate: step 6/7.</text>
</comment>
<comment type="subunit">
    <text evidence="1">Homodimer.</text>
</comment>
<comment type="subcellular location">
    <subcellularLocation>
        <location evidence="1">Cytoplasm</location>
    </subcellularLocation>
</comment>
<comment type="similarity">
    <text evidence="1">In the N-terminal section; belongs to the sugar phosphate cyclases superfamily. Dehydroquinate synthase family.</text>
</comment>
<comment type="similarity">
    <text evidence="1">In the 2nd section; belongs to the EPSP synthase family.</text>
</comment>
<comment type="similarity">
    <text evidence="1">In the 3rd section; belongs to the shikimate kinase family.</text>
</comment>
<comment type="similarity">
    <text evidence="1">In the 4th section; belongs to the type-I 3-dehydroquinase family.</text>
</comment>
<comment type="similarity">
    <text evidence="1">In the C-terminal section; belongs to the shikimate dehydrogenase family.</text>
</comment>
<proteinExistence type="inferred from homology"/>
<organism>
    <name type="scientific">Scheffersomyces stipitis (strain ATCC 58785 / CBS 6054 / NBRC 10063 / NRRL Y-11545)</name>
    <name type="common">Yeast</name>
    <name type="synonym">Pichia stipitis</name>
    <dbReference type="NCBI Taxonomy" id="322104"/>
    <lineage>
        <taxon>Eukaryota</taxon>
        <taxon>Fungi</taxon>
        <taxon>Dikarya</taxon>
        <taxon>Ascomycota</taxon>
        <taxon>Saccharomycotina</taxon>
        <taxon>Pichiomycetes</taxon>
        <taxon>Debaryomycetaceae</taxon>
        <taxon>Scheffersomyces</taxon>
    </lineage>
</organism>
<keyword id="KW-0028">Amino-acid biosynthesis</keyword>
<keyword id="KW-0057">Aromatic amino acid biosynthesis</keyword>
<keyword id="KW-0067">ATP-binding</keyword>
<keyword id="KW-0963">Cytoplasm</keyword>
<keyword id="KW-0418">Kinase</keyword>
<keyword id="KW-0456">Lyase</keyword>
<keyword id="KW-0479">Metal-binding</keyword>
<keyword id="KW-0511">Multifunctional enzyme</keyword>
<keyword id="KW-0521">NADP</keyword>
<keyword id="KW-0547">Nucleotide-binding</keyword>
<keyword id="KW-0560">Oxidoreductase</keyword>
<keyword id="KW-1185">Reference proteome</keyword>
<keyword id="KW-0808">Transferase</keyword>
<keyword id="KW-0862">Zinc</keyword>
<sequence>MTSVEKVSILGAETIHVGYGIQDHIVQEVISHLASSTYVIVTDTNMARTTPFTKLRNKFESKLKELRPESRLLFYSVSPGENNKNRETKAAVEDFLLQQGCTRDTVILAVGGGVIGDMIGFVAATFMRGVRVVQVPTSLLAMVDSSVGGKTAIDTPLGKNFVGAFHQPEYVFADVSFLETLPTRQFINGMAEVVKTAAIWNEEEFTRLEKFSKKFLAVVSAKTPDLISIKEELVKTVLESIRVKAFVVSSDEKETGLRNLLNFGHTIGHAIEAVLTPQALHGECVSIGMIKEAELARYLGVLSPVAVARLSKCLVAYGLPVSIDEKDFLKKVGNKRHNVEIDILLKKMAIDKKNDGSKIRCVILEAIGKCYQLKAHQVSKQDLSFVLTDEVLVHPFDDKLIPKTNVVIPPGSKSISNRALVLAALGTGTVRIKNLLHSDDTKHMLEAVASLKGASISTEDNGETIVVTGNGGKLVSCDEQLYLGNAGTASRFLTSVAPLVGINPQSGEHVVLTGNARMQERPIGPLVDALRANGSEIDYLNKEGSLPLKVKAGKGLNGGRIELAATISSQYVSSILMCAPYANEPVTLSLVGGKPISQLYINMTIAMMKTFGIVVTKSETEEHTYHIPRGSYVNPKEYVIESDASSATYPLAFAALTGTSCTIPNIGSSSLQGDARFAVDVLRPMGCEVVQTATSTTVTGPSVGNLKPLPHVDMEPMTDAFLTASVVAAVAKNGTQSTSITGIANQRVKECNRIAAMVSELAKFGVVANELPDGIEIHGISPNDLVTPSTEKRGIKTFDDHRVAMSFSLLAGLCKDKVLIQERSCTGKTWPGWWDILHTKFKVAIDGYELPLQHEDSTALVEKHGNGKRSIIVIGMRGAGKSTLSKWMASFLGFKLVDLDDVLEEKIGTDIRSFVQQQGWEEFRKQEAIVAKESFIKFSEGCVLSTGGGIVEGEEARESLKSYVKSGGIVLHLHRDLDETVVLLSADTTRPAYVDEIKQVWLRRENWYRECSNYHFYSAHCSSDAEFKHLRNSFTTYIKTITGFHVAQIPKKRSFYTSLTFSDLTEVASSLEDISTGSDAIELRVDLLKETTHTFVADQTAILRKSTNLPIIYTIRTESQGGKFPDNKFEELEELLALGIKLGVQYLDLQLDLPNDLLERILESKKFTKIIASYVDVSGSLRWDNVEWKNRYNQGVSLGADLVKLVGRANSFQDNLSLEVFRGTSTLKPLIAYNVGEKGKLSRVLNPRLTPVTHAKIPAESGNEGALDVAQINKAYTDIGGLSEKHFWIVGNPVGHSRSPNLHNAGYKKLNLPYVFDRFETSDAGEAFQKLIKEDKNFGGLAVTMPLKVDIMKYTDKLSDSAQVIGAVNTVIELEGEQGKYLGENTDWVGISESFVRDGIPNLENVNVNGLVVGGGGTSRAAVYALHQLGCKKIYMLNRTVSKIQEIQKNFPAEYNIEILDSVEAVEAAQPISLIVSCIPADKPIDEQLLNKLERVLYVGGEAKIGGFTPSLLEASYKPRVTPIMKIASEKYEWNVIPGVEMLVNQGITQFQLHTGFVAPYDVVHDAVVNQ</sequence>
<evidence type="ECO:0000255" key="1">
    <source>
        <dbReference type="HAMAP-Rule" id="MF_03143"/>
    </source>
</evidence>
<accession>A3LSZ2</accession>
<reference key="1">
    <citation type="journal article" date="2007" name="Nat. Biotechnol.">
        <title>Genome sequence of the lignocellulose-bioconverting and xylose-fermenting yeast Pichia stipitis.</title>
        <authorList>
            <person name="Jeffries T.W."/>
            <person name="Grigoriev I.V."/>
            <person name="Grimwood J."/>
            <person name="Laplaza J.M."/>
            <person name="Aerts A."/>
            <person name="Salamov A."/>
            <person name="Schmutz J."/>
            <person name="Lindquist E."/>
            <person name="Dehal P."/>
            <person name="Shapiro H."/>
            <person name="Jin Y.-S."/>
            <person name="Passoth V."/>
            <person name="Richardson P.M."/>
        </authorList>
    </citation>
    <scope>NUCLEOTIDE SEQUENCE [LARGE SCALE GENOMIC DNA]</scope>
    <source>
        <strain>ATCC 58785 / CBS 6054 / NBRC 10063 / NRRL Y-11545</strain>
    </source>
</reference>
<name>ARO1_PICST</name>